<name>PYRG_LATSS</name>
<gene>
    <name evidence="1" type="primary">pyrG</name>
    <name type="ordered locus">LCA_1629</name>
</gene>
<dbReference type="EC" id="6.3.4.2" evidence="1"/>
<dbReference type="EMBL" id="CR936503">
    <property type="protein sequence ID" value="CAI55936.1"/>
    <property type="molecule type" value="Genomic_DNA"/>
</dbReference>
<dbReference type="RefSeq" id="WP_011375321.1">
    <property type="nucleotide sequence ID" value="NC_007576.1"/>
</dbReference>
<dbReference type="SMR" id="Q38V48"/>
<dbReference type="STRING" id="314315.LCA_1629"/>
<dbReference type="MEROPS" id="C26.964"/>
<dbReference type="KEGG" id="lsa:LCA_1629"/>
<dbReference type="eggNOG" id="COG0504">
    <property type="taxonomic scope" value="Bacteria"/>
</dbReference>
<dbReference type="HOGENOM" id="CLU_011675_5_0_9"/>
<dbReference type="OrthoDB" id="9801107at2"/>
<dbReference type="UniPathway" id="UPA00159">
    <property type="reaction ID" value="UER00277"/>
</dbReference>
<dbReference type="Proteomes" id="UP000002707">
    <property type="component" value="Chromosome"/>
</dbReference>
<dbReference type="GO" id="GO:0005829">
    <property type="term" value="C:cytosol"/>
    <property type="evidence" value="ECO:0007669"/>
    <property type="project" value="TreeGrafter"/>
</dbReference>
<dbReference type="GO" id="GO:0005524">
    <property type="term" value="F:ATP binding"/>
    <property type="evidence" value="ECO:0007669"/>
    <property type="project" value="UniProtKB-KW"/>
</dbReference>
<dbReference type="GO" id="GO:0003883">
    <property type="term" value="F:CTP synthase activity"/>
    <property type="evidence" value="ECO:0007669"/>
    <property type="project" value="UniProtKB-UniRule"/>
</dbReference>
<dbReference type="GO" id="GO:0004359">
    <property type="term" value="F:glutaminase activity"/>
    <property type="evidence" value="ECO:0007669"/>
    <property type="project" value="RHEA"/>
</dbReference>
<dbReference type="GO" id="GO:0042802">
    <property type="term" value="F:identical protein binding"/>
    <property type="evidence" value="ECO:0007669"/>
    <property type="project" value="TreeGrafter"/>
</dbReference>
<dbReference type="GO" id="GO:0046872">
    <property type="term" value="F:metal ion binding"/>
    <property type="evidence" value="ECO:0007669"/>
    <property type="project" value="UniProtKB-KW"/>
</dbReference>
<dbReference type="GO" id="GO:0044210">
    <property type="term" value="P:'de novo' CTP biosynthetic process"/>
    <property type="evidence" value="ECO:0007669"/>
    <property type="project" value="UniProtKB-UniRule"/>
</dbReference>
<dbReference type="GO" id="GO:0019856">
    <property type="term" value="P:pyrimidine nucleobase biosynthetic process"/>
    <property type="evidence" value="ECO:0007669"/>
    <property type="project" value="TreeGrafter"/>
</dbReference>
<dbReference type="CDD" id="cd03113">
    <property type="entry name" value="CTPS_N"/>
    <property type="match status" value="1"/>
</dbReference>
<dbReference type="CDD" id="cd01746">
    <property type="entry name" value="GATase1_CTP_Synthase"/>
    <property type="match status" value="1"/>
</dbReference>
<dbReference type="FunFam" id="3.40.50.300:FF:000009">
    <property type="entry name" value="CTP synthase"/>
    <property type="match status" value="1"/>
</dbReference>
<dbReference type="FunFam" id="3.40.50.880:FF:000002">
    <property type="entry name" value="CTP synthase"/>
    <property type="match status" value="1"/>
</dbReference>
<dbReference type="Gene3D" id="3.40.50.880">
    <property type="match status" value="1"/>
</dbReference>
<dbReference type="Gene3D" id="3.40.50.300">
    <property type="entry name" value="P-loop containing nucleotide triphosphate hydrolases"/>
    <property type="match status" value="1"/>
</dbReference>
<dbReference type="HAMAP" id="MF_01227">
    <property type="entry name" value="PyrG"/>
    <property type="match status" value="1"/>
</dbReference>
<dbReference type="InterPro" id="IPR029062">
    <property type="entry name" value="Class_I_gatase-like"/>
</dbReference>
<dbReference type="InterPro" id="IPR004468">
    <property type="entry name" value="CTP_synthase"/>
</dbReference>
<dbReference type="InterPro" id="IPR017456">
    <property type="entry name" value="CTP_synthase_N"/>
</dbReference>
<dbReference type="InterPro" id="IPR017926">
    <property type="entry name" value="GATASE"/>
</dbReference>
<dbReference type="InterPro" id="IPR033828">
    <property type="entry name" value="GATase1_CTP_Synthase"/>
</dbReference>
<dbReference type="InterPro" id="IPR027417">
    <property type="entry name" value="P-loop_NTPase"/>
</dbReference>
<dbReference type="NCBIfam" id="NF003792">
    <property type="entry name" value="PRK05380.1"/>
    <property type="match status" value="1"/>
</dbReference>
<dbReference type="NCBIfam" id="TIGR00337">
    <property type="entry name" value="PyrG"/>
    <property type="match status" value="1"/>
</dbReference>
<dbReference type="PANTHER" id="PTHR11550">
    <property type="entry name" value="CTP SYNTHASE"/>
    <property type="match status" value="1"/>
</dbReference>
<dbReference type="PANTHER" id="PTHR11550:SF0">
    <property type="entry name" value="CTP SYNTHASE-RELATED"/>
    <property type="match status" value="1"/>
</dbReference>
<dbReference type="Pfam" id="PF06418">
    <property type="entry name" value="CTP_synth_N"/>
    <property type="match status" value="1"/>
</dbReference>
<dbReference type="Pfam" id="PF00117">
    <property type="entry name" value="GATase"/>
    <property type="match status" value="1"/>
</dbReference>
<dbReference type="SUPFAM" id="SSF52317">
    <property type="entry name" value="Class I glutamine amidotransferase-like"/>
    <property type="match status" value="1"/>
</dbReference>
<dbReference type="SUPFAM" id="SSF52540">
    <property type="entry name" value="P-loop containing nucleoside triphosphate hydrolases"/>
    <property type="match status" value="1"/>
</dbReference>
<dbReference type="PROSITE" id="PS51273">
    <property type="entry name" value="GATASE_TYPE_1"/>
    <property type="match status" value="1"/>
</dbReference>
<sequence>MTKYVFVTGGVVSSLGKGIVAASLGRLLKNRGLKVTIQKFDPYINVDPGTMSPYQHGEVFVTDDGTETDLDLGHYERFIDNNLNKYSNVTTGKIYSEVLRKERKGEYLGATVQVIPHITNMIKEKIMRAATTTDSDIVITEIGGTVGDIESLPFLEALRQMKADVGAENCIYIHTTLVPYLKAAGEMKTKPTQHSVKELRGIGIQPNVLVCRTEKAIPDDMRNKIAQFCDVEPEAVVESRDAESIYDIPLLLKNQGLDDFVLNHFKMTAPEADMTEWIDMLHTIKNLEGTKKIALVGKYIELQDAYISVNEALRHAGYVYNTDVKVTPIQSEDITKENVAETLAGFDGIIVPGGFGDRGLEGMILSIQYARENDVPYLGICLGMQMASIEFARNVAGITDATTGEVHPDAEHKLIDIMSDQKDLENMGGTQRLGLYPCKLKPGTKTAEAYDNQSVIQQRHRHRYEFNNEYRDLLTDKGLVFAGTSPDNRLVEVIEIPENKFFVAAQYHPEFLSRPNKPEGLFKAFIGATM</sequence>
<evidence type="ECO:0000255" key="1">
    <source>
        <dbReference type="HAMAP-Rule" id="MF_01227"/>
    </source>
</evidence>
<feature type="chain" id="PRO_0000266141" description="CTP synthase">
    <location>
        <begin position="1"/>
        <end position="530"/>
    </location>
</feature>
<feature type="domain" description="Glutamine amidotransferase type-1" evidence="1">
    <location>
        <begin position="292"/>
        <end position="530"/>
    </location>
</feature>
<feature type="region of interest" description="Amidoligase domain" evidence="1">
    <location>
        <begin position="1"/>
        <end position="267"/>
    </location>
</feature>
<feature type="active site" description="Nucleophile; for glutamine hydrolysis" evidence="1">
    <location>
        <position position="381"/>
    </location>
</feature>
<feature type="active site" evidence="1">
    <location>
        <position position="508"/>
    </location>
</feature>
<feature type="active site" evidence="1">
    <location>
        <position position="510"/>
    </location>
</feature>
<feature type="binding site" evidence="1">
    <location>
        <position position="13"/>
    </location>
    <ligand>
        <name>CTP</name>
        <dbReference type="ChEBI" id="CHEBI:37563"/>
        <note>allosteric inhibitor</note>
    </ligand>
</feature>
<feature type="binding site" evidence="1">
    <location>
        <position position="13"/>
    </location>
    <ligand>
        <name>UTP</name>
        <dbReference type="ChEBI" id="CHEBI:46398"/>
    </ligand>
</feature>
<feature type="binding site" evidence="1">
    <location>
        <begin position="14"/>
        <end position="19"/>
    </location>
    <ligand>
        <name>ATP</name>
        <dbReference type="ChEBI" id="CHEBI:30616"/>
    </ligand>
</feature>
<feature type="binding site" evidence="1">
    <location>
        <position position="54"/>
    </location>
    <ligand>
        <name>L-glutamine</name>
        <dbReference type="ChEBI" id="CHEBI:58359"/>
    </ligand>
</feature>
<feature type="binding site" evidence="1">
    <location>
        <position position="71"/>
    </location>
    <ligand>
        <name>ATP</name>
        <dbReference type="ChEBI" id="CHEBI:30616"/>
    </ligand>
</feature>
<feature type="binding site" evidence="1">
    <location>
        <position position="71"/>
    </location>
    <ligand>
        <name>Mg(2+)</name>
        <dbReference type="ChEBI" id="CHEBI:18420"/>
    </ligand>
</feature>
<feature type="binding site" evidence="1">
    <location>
        <position position="141"/>
    </location>
    <ligand>
        <name>Mg(2+)</name>
        <dbReference type="ChEBI" id="CHEBI:18420"/>
    </ligand>
</feature>
<feature type="binding site" evidence="1">
    <location>
        <begin position="148"/>
        <end position="150"/>
    </location>
    <ligand>
        <name>CTP</name>
        <dbReference type="ChEBI" id="CHEBI:37563"/>
        <note>allosteric inhibitor</note>
    </ligand>
</feature>
<feature type="binding site" evidence="1">
    <location>
        <begin position="188"/>
        <end position="193"/>
    </location>
    <ligand>
        <name>CTP</name>
        <dbReference type="ChEBI" id="CHEBI:37563"/>
        <note>allosteric inhibitor</note>
    </ligand>
</feature>
<feature type="binding site" evidence="1">
    <location>
        <begin position="188"/>
        <end position="193"/>
    </location>
    <ligand>
        <name>UTP</name>
        <dbReference type="ChEBI" id="CHEBI:46398"/>
    </ligand>
</feature>
<feature type="binding site" evidence="1">
    <location>
        <position position="224"/>
    </location>
    <ligand>
        <name>CTP</name>
        <dbReference type="ChEBI" id="CHEBI:37563"/>
        <note>allosteric inhibitor</note>
    </ligand>
</feature>
<feature type="binding site" evidence="1">
    <location>
        <position position="224"/>
    </location>
    <ligand>
        <name>UTP</name>
        <dbReference type="ChEBI" id="CHEBI:46398"/>
    </ligand>
</feature>
<feature type="binding site" evidence="1">
    <location>
        <begin position="240"/>
        <end position="242"/>
    </location>
    <ligand>
        <name>ATP</name>
        <dbReference type="ChEBI" id="CHEBI:30616"/>
    </ligand>
</feature>
<feature type="binding site" evidence="1">
    <location>
        <position position="354"/>
    </location>
    <ligand>
        <name>L-glutamine</name>
        <dbReference type="ChEBI" id="CHEBI:58359"/>
    </ligand>
</feature>
<feature type="binding site" evidence="1">
    <location>
        <begin position="382"/>
        <end position="385"/>
    </location>
    <ligand>
        <name>L-glutamine</name>
        <dbReference type="ChEBI" id="CHEBI:58359"/>
    </ligand>
</feature>
<feature type="binding site" evidence="1">
    <location>
        <position position="405"/>
    </location>
    <ligand>
        <name>L-glutamine</name>
        <dbReference type="ChEBI" id="CHEBI:58359"/>
    </ligand>
</feature>
<feature type="binding site" evidence="1">
    <location>
        <position position="463"/>
    </location>
    <ligand>
        <name>L-glutamine</name>
        <dbReference type="ChEBI" id="CHEBI:58359"/>
    </ligand>
</feature>
<protein>
    <recommendedName>
        <fullName evidence="1">CTP synthase</fullName>
        <ecNumber evidence="1">6.3.4.2</ecNumber>
    </recommendedName>
    <alternativeName>
        <fullName evidence="1">Cytidine 5'-triphosphate synthase</fullName>
    </alternativeName>
    <alternativeName>
        <fullName evidence="1">Cytidine triphosphate synthetase</fullName>
        <shortName evidence="1">CTP synthetase</shortName>
        <shortName evidence="1">CTPS</shortName>
    </alternativeName>
    <alternativeName>
        <fullName evidence="1">UTP--ammonia ligase</fullName>
    </alternativeName>
</protein>
<accession>Q38V48</accession>
<proteinExistence type="inferred from homology"/>
<organism>
    <name type="scientific">Latilactobacillus sakei subsp. sakei (strain 23K)</name>
    <name type="common">Lactobacillus sakei subsp. sakei</name>
    <dbReference type="NCBI Taxonomy" id="314315"/>
    <lineage>
        <taxon>Bacteria</taxon>
        <taxon>Bacillati</taxon>
        <taxon>Bacillota</taxon>
        <taxon>Bacilli</taxon>
        <taxon>Lactobacillales</taxon>
        <taxon>Lactobacillaceae</taxon>
        <taxon>Latilactobacillus</taxon>
    </lineage>
</organism>
<keyword id="KW-0067">ATP-binding</keyword>
<keyword id="KW-0315">Glutamine amidotransferase</keyword>
<keyword id="KW-0436">Ligase</keyword>
<keyword id="KW-0460">Magnesium</keyword>
<keyword id="KW-0479">Metal-binding</keyword>
<keyword id="KW-0547">Nucleotide-binding</keyword>
<keyword id="KW-0665">Pyrimidine biosynthesis</keyword>
<keyword id="KW-1185">Reference proteome</keyword>
<reference key="1">
    <citation type="journal article" date="2005" name="Nat. Biotechnol.">
        <title>The complete genome sequence of the meat-borne lactic acid bacterium Lactobacillus sakei 23K.</title>
        <authorList>
            <person name="Chaillou S."/>
            <person name="Champomier-Verges M.-C."/>
            <person name="Cornet M."/>
            <person name="Crutz-Le Coq A.-M."/>
            <person name="Dudez A.-M."/>
            <person name="Martin V."/>
            <person name="Beaufils S."/>
            <person name="Darbon-Rongere E."/>
            <person name="Bossy R."/>
            <person name="Loux V."/>
            <person name="Zagorec M."/>
        </authorList>
    </citation>
    <scope>NUCLEOTIDE SEQUENCE [LARGE SCALE GENOMIC DNA]</scope>
    <source>
        <strain>23K</strain>
    </source>
</reference>
<comment type="function">
    <text evidence="1">Catalyzes the ATP-dependent amination of UTP to CTP with either L-glutamine or ammonia as the source of nitrogen. Regulates intracellular CTP levels through interactions with the four ribonucleotide triphosphates.</text>
</comment>
<comment type="catalytic activity">
    <reaction evidence="1">
        <text>UTP + L-glutamine + ATP + H2O = CTP + L-glutamate + ADP + phosphate + 2 H(+)</text>
        <dbReference type="Rhea" id="RHEA:26426"/>
        <dbReference type="ChEBI" id="CHEBI:15377"/>
        <dbReference type="ChEBI" id="CHEBI:15378"/>
        <dbReference type="ChEBI" id="CHEBI:29985"/>
        <dbReference type="ChEBI" id="CHEBI:30616"/>
        <dbReference type="ChEBI" id="CHEBI:37563"/>
        <dbReference type="ChEBI" id="CHEBI:43474"/>
        <dbReference type="ChEBI" id="CHEBI:46398"/>
        <dbReference type="ChEBI" id="CHEBI:58359"/>
        <dbReference type="ChEBI" id="CHEBI:456216"/>
        <dbReference type="EC" id="6.3.4.2"/>
    </reaction>
</comment>
<comment type="catalytic activity">
    <reaction evidence="1">
        <text>L-glutamine + H2O = L-glutamate + NH4(+)</text>
        <dbReference type="Rhea" id="RHEA:15889"/>
        <dbReference type="ChEBI" id="CHEBI:15377"/>
        <dbReference type="ChEBI" id="CHEBI:28938"/>
        <dbReference type="ChEBI" id="CHEBI:29985"/>
        <dbReference type="ChEBI" id="CHEBI:58359"/>
    </reaction>
</comment>
<comment type="catalytic activity">
    <reaction evidence="1">
        <text>UTP + NH4(+) + ATP = CTP + ADP + phosphate + 2 H(+)</text>
        <dbReference type="Rhea" id="RHEA:16597"/>
        <dbReference type="ChEBI" id="CHEBI:15378"/>
        <dbReference type="ChEBI" id="CHEBI:28938"/>
        <dbReference type="ChEBI" id="CHEBI:30616"/>
        <dbReference type="ChEBI" id="CHEBI:37563"/>
        <dbReference type="ChEBI" id="CHEBI:43474"/>
        <dbReference type="ChEBI" id="CHEBI:46398"/>
        <dbReference type="ChEBI" id="CHEBI:456216"/>
    </reaction>
</comment>
<comment type="activity regulation">
    <text evidence="1">Allosterically activated by GTP, when glutamine is the substrate; GTP has no effect on the reaction when ammonia is the substrate. The allosteric effector GTP functions by stabilizing the protein conformation that binds the tetrahedral intermediate(s) formed during glutamine hydrolysis. Inhibited by the product CTP, via allosteric rather than competitive inhibition.</text>
</comment>
<comment type="pathway">
    <text evidence="1">Pyrimidine metabolism; CTP biosynthesis via de novo pathway; CTP from UDP: step 2/2.</text>
</comment>
<comment type="subunit">
    <text evidence="1">Homotetramer.</text>
</comment>
<comment type="miscellaneous">
    <text evidence="1">CTPSs have evolved a hybrid strategy for distinguishing between UTP and CTP. The overlapping regions of the product feedback inhibitory and substrate sites recognize a common feature in both compounds, the triphosphate moiety. To differentiate isosteric substrate and product pyrimidine rings, an additional pocket far from the expected kinase/ligase catalytic site, specifically recognizes the cytosine and ribose portions of the product inhibitor.</text>
</comment>
<comment type="similarity">
    <text evidence="1">Belongs to the CTP synthase family.</text>
</comment>